<evidence type="ECO:0000255" key="1">
    <source>
        <dbReference type="HAMAP-Rule" id="MF_00692"/>
    </source>
</evidence>
<evidence type="ECO:0000305" key="2"/>
<feature type="chain" id="PRO_0000121419" description="Protein nucleotidyltransferase YdiU">
    <location>
        <begin position="1"/>
        <end position="483"/>
    </location>
</feature>
<feature type="active site" description="Proton acceptor" evidence="1">
    <location>
        <position position="265"/>
    </location>
</feature>
<feature type="binding site" evidence="1">
    <location>
        <position position="100"/>
    </location>
    <ligand>
        <name>ATP</name>
        <dbReference type="ChEBI" id="CHEBI:30616"/>
    </ligand>
</feature>
<feature type="binding site" evidence="1">
    <location>
        <position position="102"/>
    </location>
    <ligand>
        <name>ATP</name>
        <dbReference type="ChEBI" id="CHEBI:30616"/>
    </ligand>
</feature>
<feature type="binding site" evidence="1">
    <location>
        <position position="103"/>
    </location>
    <ligand>
        <name>ATP</name>
        <dbReference type="ChEBI" id="CHEBI:30616"/>
    </ligand>
</feature>
<feature type="binding site" evidence="1">
    <location>
        <position position="123"/>
    </location>
    <ligand>
        <name>ATP</name>
        <dbReference type="ChEBI" id="CHEBI:30616"/>
    </ligand>
</feature>
<feature type="binding site" evidence="1">
    <location>
        <position position="135"/>
    </location>
    <ligand>
        <name>ATP</name>
        <dbReference type="ChEBI" id="CHEBI:30616"/>
    </ligand>
</feature>
<feature type="binding site" evidence="1">
    <location>
        <position position="136"/>
    </location>
    <ligand>
        <name>ATP</name>
        <dbReference type="ChEBI" id="CHEBI:30616"/>
    </ligand>
</feature>
<feature type="binding site" evidence="1">
    <location>
        <position position="189"/>
    </location>
    <ligand>
        <name>ATP</name>
        <dbReference type="ChEBI" id="CHEBI:30616"/>
    </ligand>
</feature>
<feature type="binding site" evidence="1">
    <location>
        <position position="196"/>
    </location>
    <ligand>
        <name>ATP</name>
        <dbReference type="ChEBI" id="CHEBI:30616"/>
    </ligand>
</feature>
<feature type="binding site" evidence="1">
    <location>
        <position position="266"/>
    </location>
    <ligand>
        <name>Mg(2+)</name>
        <dbReference type="ChEBI" id="CHEBI:18420"/>
    </ligand>
</feature>
<feature type="binding site" evidence="1">
    <location>
        <position position="275"/>
    </location>
    <ligand>
        <name>ATP</name>
        <dbReference type="ChEBI" id="CHEBI:30616"/>
    </ligand>
</feature>
<feature type="binding site" evidence="1">
    <location>
        <position position="275"/>
    </location>
    <ligand>
        <name>Mg(2+)</name>
        <dbReference type="ChEBI" id="CHEBI:18420"/>
    </ligand>
</feature>
<proteinExistence type="inferred from homology"/>
<comment type="function">
    <text evidence="1">Nucleotidyltransferase involved in the post-translational modification of proteins. It can catalyze the addition of adenosine monophosphate (AMP) or uridine monophosphate (UMP) to a protein, resulting in modifications known as AMPylation and UMPylation.</text>
</comment>
<comment type="catalytic activity">
    <reaction evidence="1">
        <text>L-seryl-[protein] + ATP = 3-O-(5'-adenylyl)-L-seryl-[protein] + diphosphate</text>
        <dbReference type="Rhea" id="RHEA:58120"/>
        <dbReference type="Rhea" id="RHEA-COMP:9863"/>
        <dbReference type="Rhea" id="RHEA-COMP:15073"/>
        <dbReference type="ChEBI" id="CHEBI:29999"/>
        <dbReference type="ChEBI" id="CHEBI:30616"/>
        <dbReference type="ChEBI" id="CHEBI:33019"/>
        <dbReference type="ChEBI" id="CHEBI:142516"/>
        <dbReference type="EC" id="2.7.7.108"/>
    </reaction>
</comment>
<comment type="catalytic activity">
    <reaction evidence="1">
        <text>L-threonyl-[protein] + ATP = 3-O-(5'-adenylyl)-L-threonyl-[protein] + diphosphate</text>
        <dbReference type="Rhea" id="RHEA:54292"/>
        <dbReference type="Rhea" id="RHEA-COMP:11060"/>
        <dbReference type="Rhea" id="RHEA-COMP:13847"/>
        <dbReference type="ChEBI" id="CHEBI:30013"/>
        <dbReference type="ChEBI" id="CHEBI:30616"/>
        <dbReference type="ChEBI" id="CHEBI:33019"/>
        <dbReference type="ChEBI" id="CHEBI:138113"/>
        <dbReference type="EC" id="2.7.7.108"/>
    </reaction>
</comment>
<comment type="catalytic activity">
    <reaction evidence="1">
        <text>L-tyrosyl-[protein] + ATP = O-(5'-adenylyl)-L-tyrosyl-[protein] + diphosphate</text>
        <dbReference type="Rhea" id="RHEA:54288"/>
        <dbReference type="Rhea" id="RHEA-COMP:10136"/>
        <dbReference type="Rhea" id="RHEA-COMP:13846"/>
        <dbReference type="ChEBI" id="CHEBI:30616"/>
        <dbReference type="ChEBI" id="CHEBI:33019"/>
        <dbReference type="ChEBI" id="CHEBI:46858"/>
        <dbReference type="ChEBI" id="CHEBI:83624"/>
        <dbReference type="EC" id="2.7.7.108"/>
    </reaction>
</comment>
<comment type="catalytic activity">
    <reaction evidence="1">
        <text>L-histidyl-[protein] + UTP = N(tele)-(5'-uridylyl)-L-histidyl-[protein] + diphosphate</text>
        <dbReference type="Rhea" id="RHEA:83891"/>
        <dbReference type="Rhea" id="RHEA-COMP:9745"/>
        <dbReference type="Rhea" id="RHEA-COMP:20239"/>
        <dbReference type="ChEBI" id="CHEBI:29979"/>
        <dbReference type="ChEBI" id="CHEBI:33019"/>
        <dbReference type="ChEBI" id="CHEBI:46398"/>
        <dbReference type="ChEBI" id="CHEBI:233474"/>
    </reaction>
</comment>
<comment type="catalytic activity">
    <reaction evidence="1">
        <text>L-seryl-[protein] + UTP = O-(5'-uridylyl)-L-seryl-[protein] + diphosphate</text>
        <dbReference type="Rhea" id="RHEA:64604"/>
        <dbReference type="Rhea" id="RHEA-COMP:9863"/>
        <dbReference type="Rhea" id="RHEA-COMP:16635"/>
        <dbReference type="ChEBI" id="CHEBI:29999"/>
        <dbReference type="ChEBI" id="CHEBI:33019"/>
        <dbReference type="ChEBI" id="CHEBI:46398"/>
        <dbReference type="ChEBI" id="CHEBI:156051"/>
    </reaction>
</comment>
<comment type="catalytic activity">
    <reaction evidence="1">
        <text>L-tyrosyl-[protein] + UTP = O-(5'-uridylyl)-L-tyrosyl-[protein] + diphosphate</text>
        <dbReference type="Rhea" id="RHEA:83887"/>
        <dbReference type="Rhea" id="RHEA-COMP:10136"/>
        <dbReference type="Rhea" id="RHEA-COMP:20238"/>
        <dbReference type="ChEBI" id="CHEBI:33019"/>
        <dbReference type="ChEBI" id="CHEBI:46398"/>
        <dbReference type="ChEBI" id="CHEBI:46858"/>
        <dbReference type="ChEBI" id="CHEBI:90602"/>
    </reaction>
</comment>
<comment type="cofactor">
    <cofactor evidence="1">
        <name>Mg(2+)</name>
        <dbReference type="ChEBI" id="CHEBI:18420"/>
    </cofactor>
    <cofactor evidence="1">
        <name>Mn(2+)</name>
        <dbReference type="ChEBI" id="CHEBI:29035"/>
    </cofactor>
</comment>
<comment type="similarity">
    <text evidence="1">Belongs to the SELO family.</text>
</comment>
<comment type="sequence caution" evidence="2">
    <conflict type="erroneous initiation">
        <sequence resource="EMBL-CDS" id="BAC88537"/>
    </conflict>
</comment>
<organism>
    <name type="scientific">Gloeobacter violaceus (strain ATCC 29082 / PCC 7421)</name>
    <dbReference type="NCBI Taxonomy" id="251221"/>
    <lineage>
        <taxon>Bacteria</taxon>
        <taxon>Bacillati</taxon>
        <taxon>Cyanobacteriota</taxon>
        <taxon>Cyanophyceae</taxon>
        <taxon>Gloeobacterales</taxon>
        <taxon>Gloeobacteraceae</taxon>
        <taxon>Gloeobacter</taxon>
    </lineage>
</organism>
<sequence length="483" mass="53847">MEGGLDTDASVHNNPLLQLDYEPAFASLGDDYYDLVAAAPFPEHRLRFRGDGVLRLLGLDPATVGEEHFIEAFGRFAGRGPFLAMRYHGYQFGEYNPYLGDGRGFLYGQVRGLDGELYDFGTKGSGTTPYSRGGDGRLTLKGGVREVLASEALHHLGVRTSRSLSLIETGEALWRGDEPSPTRSAVLVRTSRSHVRFGTFERLHHFKRKDLIQKLLDYVIAVYYPHYGAEPERYALFYRELVGRTAELAAQWMAVGFTHAVLNTDNMSITAESFDYGPYAFIDRFDPGFTAAYFDHYGRYSYGNQPLVCRINLEALQLPLSMVIPIADLEAGLAIFDTHYAAHYTARMLAKLGFGALGPVLGPELVKATLNYLEAAQAGYHGFFQALAASFDRSWQSDQGAIPAPVVGAPEAFELWRESYFRALASLSDSELLRVGERLNRHNPTTVLLRPAIEAVWAAIDQNDDWQPFYDLIGRLRKPYAIA</sequence>
<protein>
    <recommendedName>
        <fullName evidence="1">Protein nucleotidyltransferase YdiU</fullName>
        <ecNumber evidence="1">2.7.7.-</ecNumber>
    </recommendedName>
    <alternativeName>
        <fullName evidence="1">Protein adenylyltransferase YdiU</fullName>
        <ecNumber evidence="1">2.7.7.108</ecNumber>
    </alternativeName>
    <alternativeName>
        <fullName evidence="1">Protein uridylyltransferase YdiU</fullName>
        <ecNumber evidence="1">2.7.7.-</ecNumber>
    </alternativeName>
</protein>
<accession>Q7NN18</accession>
<dbReference type="EC" id="2.7.7.-" evidence="1"/>
<dbReference type="EC" id="2.7.7.108" evidence="1"/>
<dbReference type="EMBL" id="BA000045">
    <property type="protein sequence ID" value="BAC88537.1"/>
    <property type="status" value="ALT_INIT"/>
    <property type="molecule type" value="Genomic_DNA"/>
</dbReference>
<dbReference type="RefSeq" id="NP_923542.1">
    <property type="nucleotide sequence ID" value="NC_005125.1"/>
</dbReference>
<dbReference type="SMR" id="Q7NN18"/>
<dbReference type="STRING" id="251221.gene:10758070"/>
<dbReference type="EnsemblBacteria" id="BAC88537">
    <property type="protein sequence ID" value="BAC88537"/>
    <property type="gene ID" value="BAC88537"/>
</dbReference>
<dbReference type="KEGG" id="gvi:gll0596"/>
<dbReference type="PATRIC" id="fig|251221.4.peg.606"/>
<dbReference type="eggNOG" id="COG0397">
    <property type="taxonomic scope" value="Bacteria"/>
</dbReference>
<dbReference type="HOGENOM" id="CLU_010245_0_0_3"/>
<dbReference type="InParanoid" id="Q7NN18"/>
<dbReference type="OrthoDB" id="9773505at2"/>
<dbReference type="PhylomeDB" id="Q7NN18"/>
<dbReference type="Proteomes" id="UP000000557">
    <property type="component" value="Chromosome"/>
</dbReference>
<dbReference type="GO" id="GO:0070733">
    <property type="term" value="F:AMPylase activity"/>
    <property type="evidence" value="ECO:0007669"/>
    <property type="project" value="RHEA"/>
</dbReference>
<dbReference type="GO" id="GO:0005524">
    <property type="term" value="F:ATP binding"/>
    <property type="evidence" value="ECO:0007669"/>
    <property type="project" value="UniProtKB-UniRule"/>
</dbReference>
<dbReference type="GO" id="GO:0000287">
    <property type="term" value="F:magnesium ion binding"/>
    <property type="evidence" value="ECO:0007669"/>
    <property type="project" value="UniProtKB-UniRule"/>
</dbReference>
<dbReference type="HAMAP" id="MF_00692">
    <property type="entry name" value="YdiU_SelO"/>
    <property type="match status" value="1"/>
</dbReference>
<dbReference type="InterPro" id="IPR003846">
    <property type="entry name" value="SelO"/>
</dbReference>
<dbReference type="NCBIfam" id="NF000658">
    <property type="entry name" value="PRK00029.1"/>
    <property type="match status" value="1"/>
</dbReference>
<dbReference type="PANTHER" id="PTHR12153:SF15">
    <property type="entry name" value="PROTEIN ADENYLYLTRANSFERASE SELO, MITOCHONDRIAL"/>
    <property type="match status" value="1"/>
</dbReference>
<dbReference type="PANTHER" id="PTHR12153">
    <property type="entry name" value="SELENOPROTEIN O"/>
    <property type="match status" value="1"/>
</dbReference>
<dbReference type="Pfam" id="PF02696">
    <property type="entry name" value="SelO"/>
    <property type="match status" value="1"/>
</dbReference>
<gene>
    <name evidence="1" type="primary">ydiU</name>
    <name evidence="1" type="synonym">selO</name>
    <name type="ordered locus">gll0596</name>
</gene>
<name>SELO_GLOVI</name>
<keyword id="KW-0067">ATP-binding</keyword>
<keyword id="KW-0460">Magnesium</keyword>
<keyword id="KW-0464">Manganese</keyword>
<keyword id="KW-0479">Metal-binding</keyword>
<keyword id="KW-0547">Nucleotide-binding</keyword>
<keyword id="KW-0548">Nucleotidyltransferase</keyword>
<keyword id="KW-1185">Reference proteome</keyword>
<keyword id="KW-0808">Transferase</keyword>
<reference key="1">
    <citation type="journal article" date="2003" name="DNA Res.">
        <title>Complete genome structure of Gloeobacter violaceus PCC 7421, a cyanobacterium that lacks thylakoids.</title>
        <authorList>
            <person name="Nakamura Y."/>
            <person name="Kaneko T."/>
            <person name="Sato S."/>
            <person name="Mimuro M."/>
            <person name="Miyashita H."/>
            <person name="Tsuchiya T."/>
            <person name="Sasamoto S."/>
            <person name="Watanabe A."/>
            <person name="Kawashima K."/>
            <person name="Kishida Y."/>
            <person name="Kiyokawa C."/>
            <person name="Kohara M."/>
            <person name="Matsumoto M."/>
            <person name="Matsuno A."/>
            <person name="Nakazaki N."/>
            <person name="Shimpo S."/>
            <person name="Takeuchi C."/>
            <person name="Yamada M."/>
            <person name="Tabata S."/>
        </authorList>
    </citation>
    <scope>NUCLEOTIDE SEQUENCE [LARGE SCALE GENOMIC DNA]</scope>
    <source>
        <strain>ATCC 29082 / PCC 7421</strain>
    </source>
</reference>